<organism>
    <name type="scientific">Bacillus thuringiensis subsp. finitimus</name>
    <dbReference type="NCBI Taxonomy" id="29337"/>
    <lineage>
        <taxon>Bacteria</taxon>
        <taxon>Bacillati</taxon>
        <taxon>Bacillota</taxon>
        <taxon>Bacilli</taxon>
        <taxon>Bacillales</taxon>
        <taxon>Bacillaceae</taxon>
        <taxon>Bacillus</taxon>
        <taxon>Bacillus cereus group</taxon>
    </lineage>
</organism>
<sequence length="1109" mass="125714">MAQTYYKIGVQSTEVNSESIFFNPEVDSSDTVAVVSAGIVVVGTILTAFASFVNPGVVLISFGTLAPVLWPDPEEDPKKIWSQFMKHGEDLLNQTISTAVKEIALAHLNGFKDVLTYYERAFNDWKRNPSANTARLVSQRFENAHFNFVSNMPQLQLPTYDTLLLSCYTEAANLHLNLLHQGVQFADQWNADQPHSPMLKSSGTYYDELLVYIEKYINYCTKTYHKGLNHLKESEKITWDAYNTYRREMTLIVLDLVATFPFYDIRRFPRGVELELTREVYTSLDHLTRPPGLFTWLSDIELYTESVAEGDYLSGIRESKYYTGNQFFTMKNIYGNTNRLSKQLITLLPGEFMTHLSINRPFQTIAGINKLYSLIQKIVFTTFKNDNEYQKNFNVNNQNEPQETTNYPNDYGGSNSQKFKHNLSHFPLIIHKLEFAEYFHSIFALGWTHNSVNSQNLISESVSTQIPLVKAYEVTNNSVIRGPGFTGGDLIELRDKCSIKCKASSLKKYAISLFYAANNAIAVSIDVGDSGAGVLLQPTFSRKGNNNFTIQDLNYKDFQYHTLLVDIELPESEEIHIHLKREDDYEEGVILLIDKLEFKPIDENYTNEMNLEKAKKAVNVLFINATNALKMDVTDYHIDQVANLVECISDDLYAKEKIKFTPCIKFAKQLSQARNLLSDPNFNNLNAENSWTANTGVTIIEGDPLYKGRAIQLSAARDENFPTYLYQKIDESLLKPYTRYQLRGFVEGSQDLELDLVRYGATDIVMNVPGDLEILSYSAPINPCEEIETRLDTTCGALDRCKQSNYVNSAADVRPDQVNGDPHAFSFHIDTGTTDNNRNLGIWIIFKIATPDGYATFGNLELIELGPLSGEALAQVQRKEQKWGKNTTQKREEAAKLYAAAKQTINQLFADSQGTKLRFDTEFSNILSADKLVYKIRDVYSEVLSVIPGLNYDLFMELENRIQNAIDLYDARNTVTNGEFRNGLANWMASSNTEVRQIQAHPCWYSLGWNAQVAQSLNVKPDHGYVLRVTAKKEGIGNGYVTILDCANHIDTLTFSSCDSGFTTSSNELAAYVTKTLEIFPDTDQIRIEIGETRSTFYVESVDLIRMED</sequence>
<keyword id="KW-0749">Sporulation</keyword>
<keyword id="KW-0800">Toxin</keyword>
<keyword id="KW-0843">Virulence</keyword>
<dbReference type="EMBL" id="AF132928">
    <property type="protein sequence ID" value="AAD24189.1"/>
    <property type="molecule type" value="Genomic_DNA"/>
</dbReference>
<dbReference type="SMR" id="Q9X682"/>
<dbReference type="GO" id="GO:0005102">
    <property type="term" value="F:signaling receptor binding"/>
    <property type="evidence" value="ECO:0007669"/>
    <property type="project" value="InterPro"/>
</dbReference>
<dbReference type="GO" id="GO:0090729">
    <property type="term" value="F:toxin activity"/>
    <property type="evidence" value="ECO:0007669"/>
    <property type="project" value="UniProtKB-KW"/>
</dbReference>
<dbReference type="GO" id="GO:0030435">
    <property type="term" value="P:sporulation resulting in formation of a cellular spore"/>
    <property type="evidence" value="ECO:0007669"/>
    <property type="project" value="UniProtKB-KW"/>
</dbReference>
<dbReference type="GO" id="GO:0001907">
    <property type="term" value="P:symbiont-mediated killing of host cell"/>
    <property type="evidence" value="ECO:0007669"/>
    <property type="project" value="InterPro"/>
</dbReference>
<dbReference type="CDD" id="cd04085">
    <property type="entry name" value="delta_endotoxin_C"/>
    <property type="match status" value="1"/>
</dbReference>
<dbReference type="Gene3D" id="2.60.120.260">
    <property type="entry name" value="Galactose-binding domain-like"/>
    <property type="match status" value="2"/>
</dbReference>
<dbReference type="Gene3D" id="2.100.10.10">
    <property type="entry name" value="Pesticidal crystal protein, central domain"/>
    <property type="match status" value="1"/>
</dbReference>
<dbReference type="Gene3D" id="1.20.190.10">
    <property type="entry name" value="Pesticidal crystal protein, N-terminal domain"/>
    <property type="match status" value="1"/>
</dbReference>
<dbReference type="InterPro" id="IPR048645">
    <property type="entry name" value="Cry1Ac-like_dom-VII"/>
</dbReference>
<dbReference type="InterPro" id="IPR041587">
    <property type="entry name" value="Cry_V"/>
</dbReference>
<dbReference type="InterPro" id="IPR008979">
    <property type="entry name" value="Galactose-bd-like_sf"/>
</dbReference>
<dbReference type="InterPro" id="IPR005638">
    <property type="entry name" value="Pest_crys_dom-III"/>
</dbReference>
<dbReference type="InterPro" id="IPR005639">
    <property type="entry name" value="Pest_crys_dom_I"/>
</dbReference>
<dbReference type="InterPro" id="IPR036716">
    <property type="entry name" value="Pest_crys_N_sf"/>
</dbReference>
<dbReference type="InterPro" id="IPR036399">
    <property type="entry name" value="Pest_cryst_cen_dom_sf"/>
</dbReference>
<dbReference type="InterPro" id="IPR001178">
    <property type="entry name" value="Pest_cryst_dom_II"/>
</dbReference>
<dbReference type="Pfam" id="PF17997">
    <property type="entry name" value="Cry1Ac_D5"/>
    <property type="match status" value="1"/>
</dbReference>
<dbReference type="Pfam" id="PF21463">
    <property type="entry name" value="Cry1Ac_dom-VII"/>
    <property type="match status" value="1"/>
</dbReference>
<dbReference type="Pfam" id="PF03944">
    <property type="entry name" value="Endotoxin_C"/>
    <property type="match status" value="1"/>
</dbReference>
<dbReference type="Pfam" id="PF00555">
    <property type="entry name" value="Endotoxin_M"/>
    <property type="match status" value="1"/>
</dbReference>
<dbReference type="Pfam" id="PF03945">
    <property type="entry name" value="Endotoxin_N"/>
    <property type="match status" value="1"/>
</dbReference>
<dbReference type="SUPFAM" id="SSF51096">
    <property type="entry name" value="delta-Endotoxin (insectocide), middle domain"/>
    <property type="match status" value="1"/>
</dbReference>
<dbReference type="SUPFAM" id="SSF56849">
    <property type="entry name" value="delta-Endotoxin (insectocide), N-terminal domain"/>
    <property type="match status" value="1"/>
</dbReference>
<dbReference type="SUPFAM" id="SSF49785">
    <property type="entry name" value="Galactose-binding domain-like"/>
    <property type="match status" value="2"/>
</dbReference>
<name>C28AA_BACTF</name>
<accession>Q9X682</accession>
<gene>
    <name type="primary">cry28Aa</name>
    <name type="synonym">cryXXVIIIA(a)</name>
</gene>
<feature type="chain" id="PRO_0000174103" description="Pesticidal crystal protein Cry28Aa">
    <location>
        <begin position="1"/>
        <end position="1109"/>
    </location>
</feature>
<comment type="function">
    <text>Promotes colloidosmotic lysis by binding to the midgut epithelial cells of insects.</text>
</comment>
<comment type="developmental stage">
    <text>The crystal protein is produced during sporulation and is accumulated both as an inclusion and as part of the spore coat.</text>
</comment>
<comment type="miscellaneous">
    <text>Toxic segment of the protein is located in the N-terminus.</text>
</comment>
<comment type="similarity">
    <text evidence="1">Belongs to the delta endotoxin family.</text>
</comment>
<reference key="1">
    <citation type="journal article" date="1999" name="FEBS Lett.">
        <title>Two novel delta-endotoxin gene families cry26 and cry28 from Bacillus thuringiensis ssp. finitimus.</title>
        <authorList>
            <person name="Wojciechowska J.A."/>
            <person name="Lewitin E."/>
            <person name="Revina L.P."/>
            <person name="Zalunin I.A."/>
            <person name="Chestukhina G.G."/>
        </authorList>
    </citation>
    <scope>NUCLEOTIDE SEQUENCE [GENOMIC DNA]</scope>
    <source>
        <strain>VKPM B-1161</strain>
    </source>
</reference>
<protein>
    <recommendedName>
        <fullName>Pesticidal crystal protein Cry28Aa</fullName>
    </recommendedName>
    <alternativeName>
        <fullName>126 kDa crystal protein</fullName>
    </alternativeName>
    <alternativeName>
        <fullName>Crystaline entomocidal protoxin</fullName>
    </alternativeName>
    <alternativeName>
        <fullName>Insecticidal delta-endotoxin CryXXVIIIA(a)</fullName>
    </alternativeName>
</protein>
<evidence type="ECO:0000305" key="1"/>
<proteinExistence type="evidence at transcript level"/>